<name>DER_SALTO</name>
<gene>
    <name evidence="1" type="primary">der</name>
    <name type="synonym">engA</name>
    <name type="ordered locus">Strop_1930</name>
</gene>
<dbReference type="EMBL" id="CP000667">
    <property type="protein sequence ID" value="ABP54392.1"/>
    <property type="molecule type" value="Genomic_DNA"/>
</dbReference>
<dbReference type="RefSeq" id="WP_011905822.1">
    <property type="nucleotide sequence ID" value="NC_009380.1"/>
</dbReference>
<dbReference type="SMR" id="A4X692"/>
<dbReference type="STRING" id="369723.Strop_1930"/>
<dbReference type="KEGG" id="stp:Strop_1930"/>
<dbReference type="PATRIC" id="fig|369723.5.peg.1982"/>
<dbReference type="eggNOG" id="COG1160">
    <property type="taxonomic scope" value="Bacteria"/>
</dbReference>
<dbReference type="HOGENOM" id="CLU_016077_6_2_11"/>
<dbReference type="Proteomes" id="UP000000235">
    <property type="component" value="Chromosome"/>
</dbReference>
<dbReference type="GO" id="GO:0016887">
    <property type="term" value="F:ATP hydrolysis activity"/>
    <property type="evidence" value="ECO:0007669"/>
    <property type="project" value="InterPro"/>
</dbReference>
<dbReference type="GO" id="GO:0005525">
    <property type="term" value="F:GTP binding"/>
    <property type="evidence" value="ECO:0007669"/>
    <property type="project" value="UniProtKB-UniRule"/>
</dbReference>
<dbReference type="GO" id="GO:0043022">
    <property type="term" value="F:ribosome binding"/>
    <property type="evidence" value="ECO:0007669"/>
    <property type="project" value="TreeGrafter"/>
</dbReference>
<dbReference type="GO" id="GO:0042254">
    <property type="term" value="P:ribosome biogenesis"/>
    <property type="evidence" value="ECO:0007669"/>
    <property type="project" value="UniProtKB-KW"/>
</dbReference>
<dbReference type="CDD" id="cd01894">
    <property type="entry name" value="EngA1"/>
    <property type="match status" value="1"/>
</dbReference>
<dbReference type="CDD" id="cd01895">
    <property type="entry name" value="EngA2"/>
    <property type="match status" value="1"/>
</dbReference>
<dbReference type="FunFam" id="3.30.300.20:FF:000004">
    <property type="entry name" value="GTPase Der"/>
    <property type="match status" value="1"/>
</dbReference>
<dbReference type="FunFam" id="3.40.50.300:FF:000057">
    <property type="entry name" value="GTPase Der"/>
    <property type="match status" value="1"/>
</dbReference>
<dbReference type="Gene3D" id="3.30.300.20">
    <property type="match status" value="1"/>
</dbReference>
<dbReference type="Gene3D" id="3.40.50.300">
    <property type="entry name" value="P-loop containing nucleotide triphosphate hydrolases"/>
    <property type="match status" value="2"/>
</dbReference>
<dbReference type="HAMAP" id="MF_00195">
    <property type="entry name" value="GTPase_Der"/>
    <property type="match status" value="1"/>
</dbReference>
<dbReference type="InterPro" id="IPR003593">
    <property type="entry name" value="AAA+_ATPase"/>
</dbReference>
<dbReference type="InterPro" id="IPR031166">
    <property type="entry name" value="G_ENGA"/>
</dbReference>
<dbReference type="InterPro" id="IPR006073">
    <property type="entry name" value="GTP-bd"/>
</dbReference>
<dbReference type="InterPro" id="IPR016484">
    <property type="entry name" value="GTPase_Der"/>
</dbReference>
<dbReference type="InterPro" id="IPR032859">
    <property type="entry name" value="KH_dom-like"/>
</dbReference>
<dbReference type="InterPro" id="IPR015946">
    <property type="entry name" value="KH_dom-like_a/b"/>
</dbReference>
<dbReference type="InterPro" id="IPR027417">
    <property type="entry name" value="P-loop_NTPase"/>
</dbReference>
<dbReference type="InterPro" id="IPR005225">
    <property type="entry name" value="Small_GTP-bd"/>
</dbReference>
<dbReference type="NCBIfam" id="TIGR03594">
    <property type="entry name" value="GTPase_EngA"/>
    <property type="match status" value="1"/>
</dbReference>
<dbReference type="NCBIfam" id="NF002828">
    <property type="entry name" value="PRK03003.1"/>
    <property type="match status" value="1"/>
</dbReference>
<dbReference type="NCBIfam" id="TIGR00231">
    <property type="entry name" value="small_GTP"/>
    <property type="match status" value="2"/>
</dbReference>
<dbReference type="PANTHER" id="PTHR43834">
    <property type="entry name" value="GTPASE DER"/>
    <property type="match status" value="1"/>
</dbReference>
<dbReference type="PANTHER" id="PTHR43834:SF6">
    <property type="entry name" value="GTPASE DER"/>
    <property type="match status" value="1"/>
</dbReference>
<dbReference type="Pfam" id="PF14714">
    <property type="entry name" value="KH_dom-like"/>
    <property type="match status" value="1"/>
</dbReference>
<dbReference type="Pfam" id="PF01926">
    <property type="entry name" value="MMR_HSR1"/>
    <property type="match status" value="2"/>
</dbReference>
<dbReference type="PIRSF" id="PIRSF006485">
    <property type="entry name" value="GTP-binding_EngA"/>
    <property type="match status" value="1"/>
</dbReference>
<dbReference type="PRINTS" id="PR00326">
    <property type="entry name" value="GTP1OBG"/>
</dbReference>
<dbReference type="SMART" id="SM00382">
    <property type="entry name" value="AAA"/>
    <property type="match status" value="2"/>
</dbReference>
<dbReference type="SUPFAM" id="SSF52540">
    <property type="entry name" value="P-loop containing nucleoside triphosphate hydrolases"/>
    <property type="match status" value="2"/>
</dbReference>
<dbReference type="PROSITE" id="PS51712">
    <property type="entry name" value="G_ENGA"/>
    <property type="match status" value="2"/>
</dbReference>
<feature type="chain" id="PRO_1000077671" description="GTPase Der">
    <location>
        <begin position="1"/>
        <end position="467"/>
    </location>
</feature>
<feature type="domain" description="EngA-type G 1">
    <location>
        <begin position="25"/>
        <end position="188"/>
    </location>
</feature>
<feature type="domain" description="EngA-type G 2">
    <location>
        <begin position="199"/>
        <end position="372"/>
    </location>
</feature>
<feature type="domain" description="KH-like" evidence="1">
    <location>
        <begin position="373"/>
        <end position="455"/>
    </location>
</feature>
<feature type="binding site" evidence="1">
    <location>
        <begin position="31"/>
        <end position="38"/>
    </location>
    <ligand>
        <name>GTP</name>
        <dbReference type="ChEBI" id="CHEBI:37565"/>
        <label>1</label>
    </ligand>
</feature>
<feature type="binding site" evidence="1">
    <location>
        <begin position="78"/>
        <end position="82"/>
    </location>
    <ligand>
        <name>GTP</name>
        <dbReference type="ChEBI" id="CHEBI:37565"/>
        <label>1</label>
    </ligand>
</feature>
<feature type="binding site" evidence="1">
    <location>
        <begin position="140"/>
        <end position="143"/>
    </location>
    <ligand>
        <name>GTP</name>
        <dbReference type="ChEBI" id="CHEBI:37565"/>
        <label>1</label>
    </ligand>
</feature>
<feature type="binding site" evidence="1">
    <location>
        <begin position="205"/>
        <end position="212"/>
    </location>
    <ligand>
        <name>GTP</name>
        <dbReference type="ChEBI" id="CHEBI:37565"/>
        <label>2</label>
    </ligand>
</feature>
<feature type="binding site" evidence="1">
    <location>
        <begin position="252"/>
        <end position="256"/>
    </location>
    <ligand>
        <name>GTP</name>
        <dbReference type="ChEBI" id="CHEBI:37565"/>
        <label>2</label>
    </ligand>
</feature>
<feature type="binding site" evidence="1">
    <location>
        <begin position="317"/>
        <end position="320"/>
    </location>
    <ligand>
        <name>GTP</name>
        <dbReference type="ChEBI" id="CHEBI:37565"/>
        <label>2</label>
    </ligand>
</feature>
<protein>
    <recommendedName>
        <fullName evidence="1">GTPase Der</fullName>
    </recommendedName>
    <alternativeName>
        <fullName evidence="1">GTP-binding protein EngA</fullName>
    </alternativeName>
</protein>
<organism>
    <name type="scientific">Salinispora tropica (strain ATCC BAA-916 / DSM 44818 / JCM 13857 / NBRC 105044 / CNB-440)</name>
    <dbReference type="NCBI Taxonomy" id="369723"/>
    <lineage>
        <taxon>Bacteria</taxon>
        <taxon>Bacillati</taxon>
        <taxon>Actinomycetota</taxon>
        <taxon>Actinomycetes</taxon>
        <taxon>Micromonosporales</taxon>
        <taxon>Micromonosporaceae</taxon>
        <taxon>Salinispora</taxon>
    </lineage>
</organism>
<accession>A4X692</accession>
<proteinExistence type="inferred from homology"/>
<sequence>MNEPNSWVEWVDPELDVDEAAVPQPVVAVVGRPNVGKSTLVNRLIGRRQAVVEDVPGVTRDRVPYDAQWNGRQFAVVDTGGWEPDAKDRAAAIAAQAESAITTADVVLFVVDAVVGATDVDEAAVKMLRRSAKPVILVANKADNSSIEMEASALWSLGLGEPYPVSALHGRGSGELLDLILDRLPEAPKIVEDRPRGPRRVALVGRPNVGKSSLLNRFSGEIRAVVDAVAGTTVDPVDSLVEIGGEAWQLVDTAGLRKRVGQASGTEYYASLRTTSAIEAAEVAVVLLDASEVISEQDQRILSMVTDAGRALVIAFNKWDLVDADRRYYLDREIERELRRIPWAIRLNLSARTGRAVDKLAPALRRALASWETRVPTAQLNAWLTALVQATPHPVRGGRAPKILFATQAGAAPPRFVLFTTGPLDAGYQRFVERKLREEFGFEGSPIEISVRARKKLGPGGRGKAHG</sequence>
<evidence type="ECO:0000255" key="1">
    <source>
        <dbReference type="HAMAP-Rule" id="MF_00195"/>
    </source>
</evidence>
<reference key="1">
    <citation type="journal article" date="2007" name="Proc. Natl. Acad. Sci. U.S.A.">
        <title>Genome sequencing reveals complex secondary metabolome in the marine actinomycete Salinispora tropica.</title>
        <authorList>
            <person name="Udwary D.W."/>
            <person name="Zeigler L."/>
            <person name="Asolkar R.N."/>
            <person name="Singan V."/>
            <person name="Lapidus A."/>
            <person name="Fenical W."/>
            <person name="Jensen P.R."/>
            <person name="Moore B.S."/>
        </authorList>
    </citation>
    <scope>NUCLEOTIDE SEQUENCE [LARGE SCALE GENOMIC DNA]</scope>
    <source>
        <strain>ATCC BAA-916 / DSM 44818 / JCM 13857 / NBRC 105044 / CNB-440</strain>
    </source>
</reference>
<comment type="function">
    <text evidence="1">GTPase that plays an essential role in the late steps of ribosome biogenesis.</text>
</comment>
<comment type="subunit">
    <text evidence="1">Associates with the 50S ribosomal subunit.</text>
</comment>
<comment type="similarity">
    <text evidence="1">Belongs to the TRAFAC class TrmE-Era-EngA-EngB-Septin-like GTPase superfamily. EngA (Der) GTPase family.</text>
</comment>
<keyword id="KW-0342">GTP-binding</keyword>
<keyword id="KW-0547">Nucleotide-binding</keyword>
<keyword id="KW-1185">Reference proteome</keyword>
<keyword id="KW-0677">Repeat</keyword>
<keyword id="KW-0690">Ribosome biogenesis</keyword>